<protein>
    <recommendedName>
        <fullName>Cyclin-dependent kinase 2</fullName>
        <ecNumber evidence="2">2.7.11.22</ecNumber>
    </recommendedName>
    <alternativeName>
        <fullName>Cell division protein kinase 2</fullName>
    </alternativeName>
</protein>
<organism>
    <name type="scientific">Bos taurus</name>
    <name type="common">Bovine</name>
    <dbReference type="NCBI Taxonomy" id="9913"/>
    <lineage>
        <taxon>Eukaryota</taxon>
        <taxon>Metazoa</taxon>
        <taxon>Chordata</taxon>
        <taxon>Craniata</taxon>
        <taxon>Vertebrata</taxon>
        <taxon>Euteleostomi</taxon>
        <taxon>Mammalia</taxon>
        <taxon>Eutheria</taxon>
        <taxon>Laurasiatheria</taxon>
        <taxon>Artiodactyla</taxon>
        <taxon>Ruminantia</taxon>
        <taxon>Pecora</taxon>
        <taxon>Bovidae</taxon>
        <taxon>Bovinae</taxon>
        <taxon>Bos</taxon>
    </lineage>
</organism>
<accession>Q5E9Y0</accession>
<accession>A6QQX1</accession>
<evidence type="ECO:0000250" key="1"/>
<evidence type="ECO:0000250" key="2">
    <source>
        <dbReference type="UniProtKB" id="P24941"/>
    </source>
</evidence>
<evidence type="ECO:0000250" key="3">
    <source>
        <dbReference type="UniProtKB" id="P97377"/>
    </source>
</evidence>
<evidence type="ECO:0000250" key="4">
    <source>
        <dbReference type="UniProtKB" id="Q63699"/>
    </source>
</evidence>
<evidence type="ECO:0000255" key="5">
    <source>
        <dbReference type="PROSITE-ProRule" id="PRU00159"/>
    </source>
</evidence>
<evidence type="ECO:0000255" key="6">
    <source>
        <dbReference type="PROSITE-ProRule" id="PRU10027"/>
    </source>
</evidence>
<evidence type="ECO:0000305" key="7"/>
<feature type="chain" id="PRO_0000085767" description="Cyclin-dependent kinase 2">
    <location>
        <begin position="1"/>
        <end position="298"/>
    </location>
</feature>
<feature type="domain" description="Protein kinase" evidence="5">
    <location>
        <begin position="4"/>
        <end position="286"/>
    </location>
</feature>
<feature type="active site" description="Proton acceptor" evidence="5 6">
    <location>
        <position position="127"/>
    </location>
</feature>
<feature type="binding site" evidence="5">
    <location>
        <begin position="10"/>
        <end position="18"/>
    </location>
    <ligand>
        <name>ATP</name>
        <dbReference type="ChEBI" id="CHEBI:30616"/>
    </ligand>
</feature>
<feature type="binding site" evidence="5">
    <location>
        <position position="33"/>
    </location>
    <ligand>
        <name>ATP</name>
        <dbReference type="ChEBI" id="CHEBI:30616"/>
    </ligand>
</feature>
<feature type="binding site" evidence="5">
    <location>
        <begin position="81"/>
        <end position="83"/>
    </location>
    <ligand>
        <name>ATP</name>
        <dbReference type="ChEBI" id="CHEBI:30616"/>
    </ligand>
</feature>
<feature type="binding site" evidence="5">
    <location>
        <position position="86"/>
    </location>
    <ligand>
        <name>ATP</name>
        <dbReference type="ChEBI" id="CHEBI:30616"/>
    </ligand>
</feature>
<feature type="binding site" evidence="5">
    <location>
        <begin position="129"/>
        <end position="132"/>
    </location>
    <ligand>
        <name>ATP</name>
        <dbReference type="ChEBI" id="CHEBI:30616"/>
    </ligand>
</feature>
<feature type="binding site" evidence="2">
    <location>
        <position position="132"/>
    </location>
    <ligand>
        <name>Mg(2+)</name>
        <dbReference type="ChEBI" id="CHEBI:18420"/>
    </ligand>
</feature>
<feature type="binding site" evidence="5">
    <location>
        <position position="145"/>
    </location>
    <ligand>
        <name>ATP</name>
        <dbReference type="ChEBI" id="CHEBI:30616"/>
    </ligand>
</feature>
<feature type="binding site" evidence="2">
    <location>
        <position position="145"/>
    </location>
    <ligand>
        <name>Mg(2+)</name>
        <dbReference type="ChEBI" id="CHEBI:18420"/>
    </ligand>
</feature>
<feature type="site" description="CDK7 binding" evidence="2">
    <location>
        <position position="9"/>
    </location>
</feature>
<feature type="site" description="CDK7 binding" evidence="2">
    <location>
        <begin position="88"/>
        <end position="89"/>
    </location>
</feature>
<feature type="site" description="CDK7 binding" evidence="2">
    <location>
        <position position="166"/>
    </location>
</feature>
<feature type="modified residue" description="N-acetylmethionine" evidence="2">
    <location>
        <position position="1"/>
    </location>
</feature>
<feature type="modified residue" description="N6-acetyllysine" evidence="2">
    <location>
        <position position="6"/>
    </location>
</feature>
<feature type="modified residue" description="Phosphothreonine" evidence="2">
    <location>
        <position position="14"/>
    </location>
</feature>
<feature type="modified residue" description="Phosphotyrosine; by WEE1" evidence="2">
    <location>
        <position position="15"/>
    </location>
</feature>
<feature type="modified residue" description="Phosphotyrosine" evidence="2">
    <location>
        <position position="19"/>
    </location>
</feature>
<feature type="modified residue" description="Phosphothreonine; by CAK and CCRK" evidence="2">
    <location>
        <position position="160"/>
    </location>
</feature>
<gene>
    <name type="primary">CDK2</name>
    <name type="synonym">CDKN2</name>
</gene>
<proteinExistence type="evidence at transcript level"/>
<name>CDK2_BOVIN</name>
<comment type="function">
    <text evidence="2 3">Serine/threonine-protein kinase involved in the control of the cell cycle; essential for meiosis, but dispensable for mitosis. Phosphorylates CABLES1, CTNNB1, CDK2AP2, ERCC6, NBN, USP37, p53/TP53, NPM1, CDK7, RB1, BRCA2, MYC, NPAT, EZH2. Triggers duplication of centrosomes and DNA. Acts at the G1-S transition to promote the E2F transcriptional program and the initiation of DNA synthesis, and modulates G2 progression; controls the timing of entry into mitosis/meiosis by controlling the subsequent activation of cyclin B/CDK1 by phosphorylation, and coordinates the activation of cyclin B/CDK1 at the centrosome and in the nucleus. Crucial role in orchestrating a fine balance between cellular proliferation, cell death, and DNA repair in embryonic stem cells (ESCs). Activity of CDK2 is maximal during S phase and G2; activated by interaction with cyclin E during the early stages of DNA synthesis to permit G1-S transition, and subsequently activated by cyclin A2 (cyclin A1 in germ cells) during the late stages of DNA replication to drive the transition from S phase to mitosis, the G2 phase. EZH2 phosphorylation promotes H3K27me3 maintenance and epigenetic gene silencing. Cyclin E/CDK2 prevents oxidative stress-mediated Ras-induced senescence by phosphorylating MYC. Involved in G1-S phase DNA damage checkpoint that prevents cells with damaged DNA from initiating mitosis; regulates homologous recombination-dependent repair by phosphorylating BRCA2, this phosphorylation is low in S phase when recombination is active, but increases as cells progress towards mitosis. In response to DNA damage, double-strand break repair by homologous recombination a reduction of CDK2-mediated BRCA2 phosphorylation. Involved in regulation of telomere repair by mediating phosphorylation of NBN. Phosphorylation of RB1 disturbs its interaction with E2F1. NPM1 phosphorylation by cyclin E/CDK2 promotes its dissociation from unduplicated centrosomes, thus initiating centrosome duplication. Cyclin E/CDK2-mediated phosphorylation of NPAT at G1-S transition and until prophase stimulates the NPAT-mediated activation of histone gene transcription during S phase. Required for vitamin D-mediated growth inhibition by being itself inactivated. Involved in the nitric oxide- (NO) mediated signaling in a nitrosylation/activation-dependent manner. USP37 is activated by phosphorylation and thus triggers G1-S transition. CTNNB1 phosphorylation regulates insulin internalization (By similarity). Phosphorylates FOXP3 and negatively regulates its transcriptional activity and protein stability (By similarity). Phosphorylates ERCC6 which is essential for its chromatin remodeling activity at DNA double-strand breaks (By similarity). Acts as a regulator of the phosphatidylinositol 3-kinase/protein kinase B signal transduction by mediating phosphorylation of the C-terminus of protein kinase B (PKB/AKT1 and PKB/AKT2), promoting its activation (By similarity).</text>
</comment>
<comment type="catalytic activity">
    <reaction evidence="2">
        <text>L-seryl-[protein] + ATP = O-phospho-L-seryl-[protein] + ADP + H(+)</text>
        <dbReference type="Rhea" id="RHEA:17989"/>
        <dbReference type="Rhea" id="RHEA-COMP:9863"/>
        <dbReference type="Rhea" id="RHEA-COMP:11604"/>
        <dbReference type="ChEBI" id="CHEBI:15378"/>
        <dbReference type="ChEBI" id="CHEBI:29999"/>
        <dbReference type="ChEBI" id="CHEBI:30616"/>
        <dbReference type="ChEBI" id="CHEBI:83421"/>
        <dbReference type="ChEBI" id="CHEBI:456216"/>
        <dbReference type="EC" id="2.7.11.22"/>
    </reaction>
</comment>
<comment type="catalytic activity">
    <reaction evidence="2">
        <text>L-threonyl-[protein] + ATP = O-phospho-L-threonyl-[protein] + ADP + H(+)</text>
        <dbReference type="Rhea" id="RHEA:46608"/>
        <dbReference type="Rhea" id="RHEA-COMP:11060"/>
        <dbReference type="Rhea" id="RHEA-COMP:11605"/>
        <dbReference type="ChEBI" id="CHEBI:15378"/>
        <dbReference type="ChEBI" id="CHEBI:30013"/>
        <dbReference type="ChEBI" id="CHEBI:30616"/>
        <dbReference type="ChEBI" id="CHEBI:61977"/>
        <dbReference type="ChEBI" id="CHEBI:456216"/>
        <dbReference type="EC" id="2.7.11.22"/>
    </reaction>
</comment>
<comment type="cofactor">
    <cofactor evidence="2">
        <name>Mg(2+)</name>
        <dbReference type="ChEBI" id="CHEBI:18420"/>
    </cofactor>
    <text evidence="2">Binds 2 Mg(2+) ions.</text>
</comment>
<comment type="activity regulation">
    <text evidence="2">Phosphorylation at Thr-14 or Tyr-15 inactivates the enzyme, while phosphorylation at Thr-160 activates it. Stimulated by MYC. Inactivated by CDKN1A (p21) (By similarity).</text>
</comment>
<comment type="subunit">
    <text evidence="2 3 4">Found in a complex with CABLES1, CCNA1 and CCNE1. Interacts with CABLES1 (By similarity). Interacts with UHRF2. Part of a complex consisting of UHRF2, CDK2 and CCNE1. Interacts with the Speedy/Ringo proteins SPDYA and SPDYC. Interaction with SPDYA promotes kinase activation via a conformation change that alleviates obstruction of the substrate-binding cleft by the T-loop. Found in a complex with both SPDYA and CDKN1B/KIP1. Binds to RB1 and CDK7. Binding to CDKN1A (p21) leads to CDK2/cyclin E inactivation at the G1-S phase DNA damage checkpoint, thereby arresting cells at the G1-S transition during DNA repair. Associated with PTPN6 and beta-catenin/CTNNB1. Interacts with CACUL1. May interact with CEP63. Interacts with ANKRD17. Interacts with CEBPA (when phosphorylated). Forms a ternary complex with CCNA2 and CDKN1B; CDKN1B inhibits the kinase activity of CDK2 through conformational rearrangements. Interacts with cyclins A, B1, B3, D, or E. Interacts with CDK2AP2 (By similarity).</text>
</comment>
<comment type="subcellular location">
    <subcellularLocation>
        <location evidence="1">Cytoplasm</location>
        <location evidence="1">Cytoskeleton</location>
        <location evidence="1">Microtubule organizing center</location>
        <location evidence="1">Centrosome</location>
    </subcellularLocation>
    <subcellularLocation>
        <location evidence="1">Nucleus</location>
        <location evidence="1">Cajal body</location>
    </subcellularLocation>
    <subcellularLocation>
        <location evidence="1">Cytoplasm</location>
    </subcellularLocation>
    <subcellularLocation>
        <location evidence="1">Endosome</location>
    </subcellularLocation>
    <text evidence="1">Localized at the centrosomes in late G2 phase after separation of the centrosomes but before the start of prophase. Nuclear-cytoplasmic trafficking is mediated during the inhibition by 1,25-(OH)(2)D(3) (By similarity).</text>
</comment>
<comment type="PTM">
    <text evidence="2">Phosphorylated at Thr-160 by CDK7 in a CAK complex. Phosphorylation at Thr-160 promotes kinase activity, whereas phosphorylation at Tyr-15 by WEE1 reduces slightly kinase activity. Phosphorylated on Thr-14 and Tyr-15 during S and G2 phases before being dephosphorylated by CDC25A.</text>
</comment>
<comment type="PTM">
    <text evidence="2">Nitrosylated after treatment with nitric oxide (DETA-NO).</text>
</comment>
<comment type="similarity">
    <text evidence="7">Belongs to the protein kinase superfamily. CMGC Ser/Thr protein kinase family. CDC2/CDKX subfamily.</text>
</comment>
<reference key="1">
    <citation type="journal article" date="2005" name="BMC Genomics">
        <title>Characterization of 954 bovine full-CDS cDNA sequences.</title>
        <authorList>
            <person name="Harhay G.P."/>
            <person name="Sonstegard T.S."/>
            <person name="Keele J.W."/>
            <person name="Heaton M.P."/>
            <person name="Clawson M.L."/>
            <person name="Snelling W.M."/>
            <person name="Wiedmann R.T."/>
            <person name="Van Tassell C.P."/>
            <person name="Smith T.P.L."/>
        </authorList>
    </citation>
    <scope>NUCLEOTIDE SEQUENCE [LARGE SCALE MRNA]</scope>
</reference>
<reference key="2">
    <citation type="submission" date="2007-07" db="EMBL/GenBank/DDBJ databases">
        <authorList>
            <consortium name="NIH - Mammalian Gene Collection (MGC) project"/>
        </authorList>
    </citation>
    <scope>NUCLEOTIDE SEQUENCE [LARGE SCALE MRNA]</scope>
    <source>
        <strain>Hereford</strain>
        <tissue>Thymus</tissue>
    </source>
</reference>
<dbReference type="EC" id="2.7.11.22" evidence="2"/>
<dbReference type="EMBL" id="BT020790">
    <property type="protein sequence ID" value="AAX08807.1"/>
    <property type="molecule type" value="mRNA"/>
</dbReference>
<dbReference type="EMBL" id="BC150026">
    <property type="protein sequence ID" value="AAI50027.1"/>
    <property type="molecule type" value="mRNA"/>
</dbReference>
<dbReference type="RefSeq" id="NP_001014934.1">
    <property type="nucleotide sequence ID" value="NM_001014934.1"/>
</dbReference>
<dbReference type="SMR" id="Q5E9Y0"/>
<dbReference type="BioGRID" id="175836">
    <property type="interactions" value="1"/>
</dbReference>
<dbReference type="FunCoup" id="Q5E9Y0">
    <property type="interactions" value="2995"/>
</dbReference>
<dbReference type="STRING" id="9913.ENSBTAP00000005252"/>
<dbReference type="PaxDb" id="9913-ENSBTAP00000005252"/>
<dbReference type="Ensembl" id="ENSBTAT00000005252.4">
    <property type="protein sequence ID" value="ENSBTAP00000005252.2"/>
    <property type="gene ID" value="ENSBTAG00000004021.4"/>
</dbReference>
<dbReference type="GeneID" id="519217"/>
<dbReference type="KEGG" id="bta:519217"/>
<dbReference type="CTD" id="1017"/>
<dbReference type="VEuPathDB" id="HostDB:ENSBTAG00000004021"/>
<dbReference type="VGNC" id="VGNC:27123">
    <property type="gene designation" value="CDK2"/>
</dbReference>
<dbReference type="eggNOG" id="KOG0594">
    <property type="taxonomic scope" value="Eukaryota"/>
</dbReference>
<dbReference type="GeneTree" id="ENSGT00940000159517"/>
<dbReference type="HOGENOM" id="CLU_000288_181_1_1"/>
<dbReference type="InParanoid" id="Q5E9Y0"/>
<dbReference type="OMA" id="WSLACIY"/>
<dbReference type="OrthoDB" id="1732493at2759"/>
<dbReference type="TreeFam" id="TF101021"/>
<dbReference type="Reactome" id="R-BTA-1538133">
    <property type="pathway name" value="G0 and Early G1"/>
</dbReference>
<dbReference type="Reactome" id="R-BTA-171319">
    <property type="pathway name" value="Telomere Extension By Telomerase"/>
</dbReference>
<dbReference type="Reactome" id="R-BTA-176187">
    <property type="pathway name" value="Activation of ATR in response to replication stress"/>
</dbReference>
<dbReference type="Reactome" id="R-BTA-176408">
    <property type="pathway name" value="Regulation of APC/C activators between G1/S and early anaphase"/>
</dbReference>
<dbReference type="Reactome" id="R-BTA-187577">
    <property type="pathway name" value="SCF(Skp2)-mediated degradation of p27/p21"/>
</dbReference>
<dbReference type="Reactome" id="R-BTA-2559582">
    <property type="pathway name" value="Senescence-Associated Secretory Phenotype (SASP)"/>
</dbReference>
<dbReference type="Reactome" id="R-BTA-2559586">
    <property type="pathway name" value="DNA Damage/Telomere Stress Induced Senescence"/>
</dbReference>
<dbReference type="Reactome" id="R-BTA-5693607">
    <property type="pathway name" value="Processing of DNA double-strand break ends"/>
</dbReference>
<dbReference type="Reactome" id="R-BTA-6804116">
    <property type="pathway name" value="TP53 Regulates Transcription of Genes Involved in G1 Cell Cycle Arrest"/>
</dbReference>
<dbReference type="Reactome" id="R-BTA-6804756">
    <property type="pathway name" value="Regulation of TP53 Activity through Phosphorylation"/>
</dbReference>
<dbReference type="Reactome" id="R-BTA-6804757">
    <property type="pathway name" value="Regulation of TP53 Degradation"/>
</dbReference>
<dbReference type="Reactome" id="R-BTA-68911">
    <property type="pathway name" value="G2 Phase"/>
</dbReference>
<dbReference type="Reactome" id="R-BTA-68949">
    <property type="pathway name" value="Orc1 removal from chromatin"/>
</dbReference>
<dbReference type="Reactome" id="R-BTA-68962">
    <property type="pathway name" value="Activation of the pre-replicative complex"/>
</dbReference>
<dbReference type="Reactome" id="R-BTA-69017">
    <property type="pathway name" value="CDK-mediated phosphorylation and removal of Cdc6"/>
</dbReference>
<dbReference type="Reactome" id="R-BTA-69200">
    <property type="pathway name" value="Phosphorylation of proteins involved in G1/S transition by active Cyclin E:Cdk2 complexes"/>
</dbReference>
<dbReference type="Reactome" id="R-BTA-69202">
    <property type="pathway name" value="Cyclin E associated events during G1/S transition"/>
</dbReference>
<dbReference type="Reactome" id="R-BTA-69231">
    <property type="pathway name" value="Cyclin D associated events in G1"/>
</dbReference>
<dbReference type="Reactome" id="R-BTA-69273">
    <property type="pathway name" value="Cyclin A/B1/B2 associated events during G2/M transition"/>
</dbReference>
<dbReference type="Reactome" id="R-BTA-69563">
    <property type="pathway name" value="p53-Dependent G1 DNA Damage Response"/>
</dbReference>
<dbReference type="Reactome" id="R-BTA-69656">
    <property type="pathway name" value="Cyclin A:Cdk2-associated events at S phase entry"/>
</dbReference>
<dbReference type="Reactome" id="R-BTA-8849470">
    <property type="pathway name" value="PTK6 Regulates Cell Cycle"/>
</dbReference>
<dbReference type="Proteomes" id="UP000009136">
    <property type="component" value="Chromosome 5"/>
</dbReference>
<dbReference type="Bgee" id="ENSBTAG00000004021">
    <property type="expression patterns" value="Expressed in spermatocyte and 103 other cell types or tissues"/>
</dbReference>
<dbReference type="GO" id="GO:0015030">
    <property type="term" value="C:Cajal body"/>
    <property type="evidence" value="ECO:0007669"/>
    <property type="project" value="UniProtKB-SubCell"/>
</dbReference>
<dbReference type="GO" id="GO:0005813">
    <property type="term" value="C:centrosome"/>
    <property type="evidence" value="ECO:0007669"/>
    <property type="project" value="UniProtKB-SubCell"/>
</dbReference>
<dbReference type="GO" id="GO:0000307">
    <property type="term" value="C:cyclin-dependent protein kinase holoenzyme complex"/>
    <property type="evidence" value="ECO:0000250"/>
    <property type="project" value="AgBase"/>
</dbReference>
<dbReference type="GO" id="GO:0005737">
    <property type="term" value="C:cytoplasm"/>
    <property type="evidence" value="ECO:0000318"/>
    <property type="project" value="GO_Central"/>
</dbReference>
<dbReference type="GO" id="GO:0005768">
    <property type="term" value="C:endosome"/>
    <property type="evidence" value="ECO:0007669"/>
    <property type="project" value="UniProtKB-SubCell"/>
</dbReference>
<dbReference type="GO" id="GO:0005634">
    <property type="term" value="C:nucleus"/>
    <property type="evidence" value="ECO:0000250"/>
    <property type="project" value="AgBase"/>
</dbReference>
<dbReference type="GO" id="GO:0005667">
    <property type="term" value="C:transcription regulator complex"/>
    <property type="evidence" value="ECO:0000250"/>
    <property type="project" value="AgBase"/>
</dbReference>
<dbReference type="GO" id="GO:0005524">
    <property type="term" value="F:ATP binding"/>
    <property type="evidence" value="ECO:0007669"/>
    <property type="project" value="UniProtKB-KW"/>
</dbReference>
<dbReference type="GO" id="GO:0030332">
    <property type="term" value="F:cyclin binding"/>
    <property type="evidence" value="ECO:0000318"/>
    <property type="project" value="GO_Central"/>
</dbReference>
<dbReference type="GO" id="GO:0097472">
    <property type="term" value="F:cyclin-dependent protein kinase activity"/>
    <property type="evidence" value="ECO:0000250"/>
    <property type="project" value="UniProtKB"/>
</dbReference>
<dbReference type="GO" id="GO:0004693">
    <property type="term" value="F:cyclin-dependent protein serine/threonine kinase activity"/>
    <property type="evidence" value="ECO:0000250"/>
    <property type="project" value="AgBase"/>
</dbReference>
<dbReference type="GO" id="GO:0016301">
    <property type="term" value="F:kinase activity"/>
    <property type="evidence" value="ECO:0000250"/>
    <property type="project" value="AgBase"/>
</dbReference>
<dbReference type="GO" id="GO:0046872">
    <property type="term" value="F:metal ion binding"/>
    <property type="evidence" value="ECO:0007669"/>
    <property type="project" value="UniProtKB-KW"/>
</dbReference>
<dbReference type="GO" id="GO:0106310">
    <property type="term" value="F:protein serine kinase activity"/>
    <property type="evidence" value="ECO:0007669"/>
    <property type="project" value="RHEA"/>
</dbReference>
<dbReference type="GO" id="GO:0051301">
    <property type="term" value="P:cell division"/>
    <property type="evidence" value="ECO:0007669"/>
    <property type="project" value="UniProtKB-KW"/>
</dbReference>
<dbReference type="GO" id="GO:0006281">
    <property type="term" value="P:DNA repair"/>
    <property type="evidence" value="ECO:0007669"/>
    <property type="project" value="UniProtKB-KW"/>
</dbReference>
<dbReference type="GO" id="GO:0000082">
    <property type="term" value="P:G1/S transition of mitotic cell cycle"/>
    <property type="evidence" value="ECO:0000318"/>
    <property type="project" value="GO_Central"/>
</dbReference>
<dbReference type="GO" id="GO:0051321">
    <property type="term" value="P:meiotic cell cycle"/>
    <property type="evidence" value="ECO:0007669"/>
    <property type="project" value="UniProtKB-KW"/>
</dbReference>
<dbReference type="GO" id="GO:0045893">
    <property type="term" value="P:positive regulation of DNA-templated transcription"/>
    <property type="evidence" value="ECO:0000250"/>
    <property type="project" value="AgBase"/>
</dbReference>
<dbReference type="GO" id="GO:0006813">
    <property type="term" value="P:potassium ion transport"/>
    <property type="evidence" value="ECO:0000250"/>
    <property type="project" value="AgBase"/>
</dbReference>
<dbReference type="GO" id="GO:0006468">
    <property type="term" value="P:protein phosphorylation"/>
    <property type="evidence" value="ECO:0000250"/>
    <property type="project" value="UniProtKB"/>
</dbReference>
<dbReference type="GO" id="GO:0010389">
    <property type="term" value="P:regulation of G2/M transition of mitotic cell cycle"/>
    <property type="evidence" value="ECO:0000318"/>
    <property type="project" value="GO_Central"/>
</dbReference>
<dbReference type="GO" id="GO:0010468">
    <property type="term" value="P:regulation of gene expression"/>
    <property type="evidence" value="ECO:0000318"/>
    <property type="project" value="GO_Central"/>
</dbReference>
<dbReference type="GO" id="GO:0007165">
    <property type="term" value="P:signal transduction"/>
    <property type="evidence" value="ECO:0000318"/>
    <property type="project" value="GO_Central"/>
</dbReference>
<dbReference type="CDD" id="cd07860">
    <property type="entry name" value="STKc_CDK2_3"/>
    <property type="match status" value="1"/>
</dbReference>
<dbReference type="FunFam" id="1.10.510.10:FF:000144">
    <property type="entry name" value="Cyclin-dependent kinase 2"/>
    <property type="match status" value="1"/>
</dbReference>
<dbReference type="FunFam" id="3.30.200.20:FF:000599">
    <property type="entry name" value="Cyclin-dependent kinase 2"/>
    <property type="match status" value="1"/>
</dbReference>
<dbReference type="Gene3D" id="3.30.200.20">
    <property type="entry name" value="Phosphorylase Kinase, domain 1"/>
    <property type="match status" value="1"/>
</dbReference>
<dbReference type="Gene3D" id="1.10.510.10">
    <property type="entry name" value="Transferase(Phosphotransferase) domain 1"/>
    <property type="match status" value="1"/>
</dbReference>
<dbReference type="InterPro" id="IPR050108">
    <property type="entry name" value="CDK"/>
</dbReference>
<dbReference type="InterPro" id="IPR011009">
    <property type="entry name" value="Kinase-like_dom_sf"/>
</dbReference>
<dbReference type="InterPro" id="IPR000719">
    <property type="entry name" value="Prot_kinase_dom"/>
</dbReference>
<dbReference type="InterPro" id="IPR017441">
    <property type="entry name" value="Protein_kinase_ATP_BS"/>
</dbReference>
<dbReference type="InterPro" id="IPR008271">
    <property type="entry name" value="Ser/Thr_kinase_AS"/>
</dbReference>
<dbReference type="PANTHER" id="PTHR24056">
    <property type="entry name" value="CELL DIVISION PROTEIN KINASE"/>
    <property type="match status" value="1"/>
</dbReference>
<dbReference type="PANTHER" id="PTHR24056:SF521">
    <property type="entry name" value="CYCLIN-DEPENDENT KINASE 2"/>
    <property type="match status" value="1"/>
</dbReference>
<dbReference type="Pfam" id="PF00069">
    <property type="entry name" value="Pkinase"/>
    <property type="match status" value="1"/>
</dbReference>
<dbReference type="SMART" id="SM00220">
    <property type="entry name" value="S_TKc"/>
    <property type="match status" value="1"/>
</dbReference>
<dbReference type="SUPFAM" id="SSF56112">
    <property type="entry name" value="Protein kinase-like (PK-like)"/>
    <property type="match status" value="1"/>
</dbReference>
<dbReference type="PROSITE" id="PS00107">
    <property type="entry name" value="PROTEIN_KINASE_ATP"/>
    <property type="match status" value="1"/>
</dbReference>
<dbReference type="PROSITE" id="PS50011">
    <property type="entry name" value="PROTEIN_KINASE_DOM"/>
    <property type="match status" value="1"/>
</dbReference>
<dbReference type="PROSITE" id="PS00108">
    <property type="entry name" value="PROTEIN_KINASE_ST"/>
    <property type="match status" value="1"/>
</dbReference>
<keyword id="KW-0007">Acetylation</keyword>
<keyword id="KW-0067">ATP-binding</keyword>
<keyword id="KW-0131">Cell cycle</keyword>
<keyword id="KW-0132">Cell division</keyword>
<keyword id="KW-0963">Cytoplasm</keyword>
<keyword id="KW-0206">Cytoskeleton</keyword>
<keyword id="KW-0227">DNA damage</keyword>
<keyword id="KW-0234">DNA repair</keyword>
<keyword id="KW-0967">Endosome</keyword>
<keyword id="KW-0418">Kinase</keyword>
<keyword id="KW-0460">Magnesium</keyword>
<keyword id="KW-0469">Meiosis</keyword>
<keyword id="KW-0479">Metal-binding</keyword>
<keyword id="KW-0498">Mitosis</keyword>
<keyword id="KW-0547">Nucleotide-binding</keyword>
<keyword id="KW-0539">Nucleus</keyword>
<keyword id="KW-0597">Phosphoprotein</keyword>
<keyword id="KW-1185">Reference proteome</keyword>
<keyword id="KW-0723">Serine/threonine-protein kinase</keyword>
<keyword id="KW-0808">Transferase</keyword>
<sequence>MENFQKVEKIGEGTYGVVYKAKNKLTGEVVALKKIRLDTETEGVPSTAIREISLLKELNHPNIVKLLDVIHTENKLYLVFEFLHQDLKKFMDASALTGIPLPLIKSYLFQLLQGLAFCHSHRVLHRDLKPQNLLINADGSIKLADFGLARAFGVPVRTYTHEVVTLWYRAPEILLGCKYYSTAVDIWSLGCIFAEMVTRRALFPGDSEIDQLFRIFRTLGTPDEVVWPGVTSMPDYKPSFPKWARQDFSKVVPPLDEDGRSLLSQMLHYDPNKRISAKAALAHPFFQDVTKPVPHLRL</sequence>